<protein>
    <recommendedName>
        <fullName evidence="3">Putative sodium channel toxin Ts38</fullName>
    </recommendedName>
    <alternativeName>
        <fullName evidence="4">Tityustoxin-38</fullName>
    </alternativeName>
</protein>
<dbReference type="EMBL" id="MT081347">
    <property type="protein sequence ID" value="QPD99029.1"/>
    <property type="molecule type" value="mRNA"/>
</dbReference>
<dbReference type="SMR" id="A0A7S8MU86"/>
<dbReference type="GO" id="GO:0005576">
    <property type="term" value="C:extracellular region"/>
    <property type="evidence" value="ECO:0007669"/>
    <property type="project" value="UniProtKB-SubCell"/>
</dbReference>
<dbReference type="GO" id="GO:0019871">
    <property type="term" value="F:sodium channel inhibitor activity"/>
    <property type="evidence" value="ECO:0007669"/>
    <property type="project" value="InterPro"/>
</dbReference>
<dbReference type="GO" id="GO:0090729">
    <property type="term" value="F:toxin activity"/>
    <property type="evidence" value="ECO:0007669"/>
    <property type="project" value="UniProtKB-KW"/>
</dbReference>
<dbReference type="Gene3D" id="3.30.30.10">
    <property type="entry name" value="Knottin, scorpion toxin-like"/>
    <property type="match status" value="1"/>
</dbReference>
<dbReference type="InterPro" id="IPR036574">
    <property type="entry name" value="Scorpion_toxin-like_sf"/>
</dbReference>
<dbReference type="InterPro" id="IPR002061">
    <property type="entry name" value="Scorpion_toxinL/defensin"/>
</dbReference>
<dbReference type="Pfam" id="PF00537">
    <property type="entry name" value="Toxin_3"/>
    <property type="match status" value="1"/>
</dbReference>
<dbReference type="SUPFAM" id="SSF57095">
    <property type="entry name" value="Scorpion toxin-like"/>
    <property type="match status" value="1"/>
</dbReference>
<feature type="signal peptide" evidence="1">
    <location>
        <begin position="1"/>
        <end position="22"/>
    </location>
</feature>
<feature type="chain" id="PRO_5030739109" description="Putative sodium channel toxin Ts38">
    <location>
        <begin position="23"/>
        <end position="87"/>
    </location>
</feature>
<feature type="disulfide bond" evidence="2">
    <location>
        <begin position="42"/>
        <end position="65"/>
    </location>
</feature>
<feature type="disulfide bond" evidence="2">
    <location>
        <begin position="51"/>
        <end position="72"/>
    </location>
</feature>
<feature type="disulfide bond" evidence="2">
    <location>
        <begin position="55"/>
        <end position="74"/>
    </location>
</feature>
<sequence length="87" mass="10225">MKHLKFYSILFLFSIFVYKVNALQKILDGYFLSDEEGLFLSCKHKFDEYFCLEKCVESGAKDGYCVGHSFICFCKYEVGSSPRHFMF</sequence>
<accession>A0A7S8MU86</accession>
<reference evidence="6" key="1">
    <citation type="journal article" date="2021" name="Toxicon">
        <title>Novel components of Tityus serrulatus venom: a transcriptomic approach.</title>
        <authorList>
            <person name="Kalapothakis Y."/>
            <person name="Miranda K."/>
            <person name="Pereira A.H."/>
            <person name="Witt A.S.A."/>
            <person name="Marani C."/>
            <person name="Martins A.P."/>
            <person name="Leal H.G."/>
            <person name="Campos-Junior E."/>
            <person name="Pimenta A.M.C."/>
            <person name="Borges A."/>
            <person name="Chavez-Olortegui C."/>
            <person name="Kalapothakis E."/>
        </authorList>
    </citation>
    <scope>NUCLEOTIDE SEQUENCE [MRNA]</scope>
    <source>
        <tissue>Telson</tissue>
    </source>
</reference>
<organism>
    <name type="scientific">Tityus serrulatus</name>
    <name type="common">Brazilian scorpion</name>
    <dbReference type="NCBI Taxonomy" id="6887"/>
    <lineage>
        <taxon>Eukaryota</taxon>
        <taxon>Metazoa</taxon>
        <taxon>Ecdysozoa</taxon>
        <taxon>Arthropoda</taxon>
        <taxon>Chelicerata</taxon>
        <taxon>Arachnida</taxon>
        <taxon>Scorpiones</taxon>
        <taxon>Buthida</taxon>
        <taxon>Buthoidea</taxon>
        <taxon>Buthidae</taxon>
        <taxon>Tityus</taxon>
    </lineage>
</organism>
<keyword id="KW-1015">Disulfide bond</keyword>
<keyword id="KW-0872">Ion channel impairing toxin</keyword>
<keyword id="KW-0528">Neurotoxin</keyword>
<keyword id="KW-0964">Secreted</keyword>
<keyword id="KW-0732">Signal</keyword>
<keyword id="KW-0800">Toxin</keyword>
<keyword id="KW-0738">Voltage-gated sodium channel impairing toxin</keyword>
<evidence type="ECO:0000255" key="1"/>
<evidence type="ECO:0000255" key="2">
    <source>
        <dbReference type="PROSITE-ProRule" id="PRU01210"/>
    </source>
</evidence>
<evidence type="ECO:0000303" key="3">
    <source>
    </source>
</evidence>
<evidence type="ECO:0000305" key="4"/>
<evidence type="ECO:0000305" key="5">
    <source>
    </source>
</evidence>
<evidence type="ECO:0000312" key="6">
    <source>
        <dbReference type="EMBL" id="QPD99029.1"/>
    </source>
</evidence>
<name>SCX38_TITSE</name>
<proteinExistence type="inferred from homology"/>
<comment type="function">
    <text evidence="5">Putative sodium channel toxin.</text>
</comment>
<comment type="subcellular location">
    <subcellularLocation>
        <location evidence="5">Secreted</location>
    </subcellularLocation>
</comment>
<comment type="tissue specificity">
    <text evidence="5">Expressed by the venom gland.</text>
</comment>
<comment type="similarity">
    <text evidence="4">Belongs to the long (3 C-C) scorpion toxin superfamily. Sodium channel inhibitor family.</text>
</comment>